<gene>
    <name evidence="5" type="primary">VPS38</name>
    <name type="ordered locus">CAGL0B02772g</name>
</gene>
<organism>
    <name type="scientific">Candida glabrata (strain ATCC 2001 / BCRC 20586 / JCM 3761 / NBRC 0622 / NRRL Y-65 / CBS 138)</name>
    <name type="common">Yeast</name>
    <name type="synonym">Nakaseomyces glabratus</name>
    <dbReference type="NCBI Taxonomy" id="284593"/>
    <lineage>
        <taxon>Eukaryota</taxon>
        <taxon>Fungi</taxon>
        <taxon>Dikarya</taxon>
        <taxon>Ascomycota</taxon>
        <taxon>Saccharomycotina</taxon>
        <taxon>Saccharomycetes</taxon>
        <taxon>Saccharomycetales</taxon>
        <taxon>Saccharomycetaceae</taxon>
        <taxon>Nakaseomyces</taxon>
    </lineage>
</organism>
<name>VPS38_CANGA</name>
<sequence length="432" mass="50728">MPQYLLKRHLRHLKSISVNNISLIDESKKIGSRVGFIPCFIVLEDTRSRKPFYVSELETGSLSSLHFTELVIPKEFELCTLFEIKIAAKIPSFLLRHDEDELWCFVAMHTVNLDELTYIGNQRDDHITMEQNLPMIEMIDGWYALPNKNIRYTGLQISPVANMNNKNRKRMCPFNSLVKLSKLTQYTGDMVEEKQISTNKIERLIKSTHNIGTGILDTYQENIKMIESRCEIKRQKLKRLKDQLSELDDGNELNDVDSNIETYRDEYANIYSKLSNAKEAIEKLQKKKLIQLINVFKNTFLFDKDVGLISFQFDDDEIEVEEFCKNLERVSIEQIYDRYNEYPKSVKIINAMLGFYSLFIVIYSYRIIQRKLPFDIVFQGSETIVGRKYRLSFPESRSTKSKEEFHIALRAFNENIMQFTQYLGHITQSFTI</sequence>
<proteinExistence type="inferred from homology"/>
<evidence type="ECO:0000250" key="1">
    <source>
        <dbReference type="UniProtKB" id="Q05919"/>
    </source>
</evidence>
<evidence type="ECO:0000255" key="2"/>
<evidence type="ECO:0000255" key="3">
    <source>
        <dbReference type="PROSITE-ProRule" id="PRU00498"/>
    </source>
</evidence>
<evidence type="ECO:0000269" key="4">
    <source>
    </source>
</evidence>
<evidence type="ECO:0000303" key="5">
    <source>
    </source>
</evidence>
<evidence type="ECO:0000305" key="6"/>
<comment type="function">
    <text evidence="1">Involved in endosome-to-Golgi retrograde transport as part of the VPS34 PI3-kinase complex II (By similarity). This complex is required for the endosome-to-Golgi retrieval of PEP1 and KEX2, and the recruitment of VPS5 and VPS7, two components of the retromer complex, to endosomal membranes (probably through generating a specific pool of phosphatidylinositol 3-phosphate allowing the recruitment of the retromer complex proteins to the endosome). Mediates the interaction between VPS30 and the VPS34-VPS15 core complex, leading to the recruitment of VPS30 to the membrane (By similarity).</text>
</comment>
<comment type="subunit">
    <text evidence="1">Component of the VPS34 PI3-kinase complex II composed of VPS15, VPS30, VPS34 and VPS38.</text>
</comment>
<comment type="subcellular location">
    <subcellularLocation>
        <location evidence="1">Golgi apparatus</location>
        <location evidence="1">trans-Golgi network membrane</location>
        <topology evidence="2">Single-pass membrane protein</topology>
    </subcellularLocation>
    <subcellularLocation>
        <location evidence="1">Endosome membrane</location>
        <topology evidence="2">Single-pass membrane protein</topology>
    </subcellularLocation>
</comment>
<comment type="disruption phenotype">
    <text evidence="4">Deletion was unsuccessful, possibly because VPS38 is essential for cell growth.</text>
</comment>
<comment type="similarity">
    <text evidence="6">Belongs to the VPS38 family.</text>
</comment>
<reference key="1">
    <citation type="journal article" date="2004" name="Nature">
        <title>Genome evolution in yeasts.</title>
        <authorList>
            <person name="Dujon B."/>
            <person name="Sherman D."/>
            <person name="Fischer G."/>
            <person name="Durrens P."/>
            <person name="Casaregola S."/>
            <person name="Lafontaine I."/>
            <person name="de Montigny J."/>
            <person name="Marck C."/>
            <person name="Neuveglise C."/>
            <person name="Talla E."/>
            <person name="Goffard N."/>
            <person name="Frangeul L."/>
            <person name="Aigle M."/>
            <person name="Anthouard V."/>
            <person name="Babour A."/>
            <person name="Barbe V."/>
            <person name="Barnay S."/>
            <person name="Blanchin S."/>
            <person name="Beckerich J.-M."/>
            <person name="Beyne E."/>
            <person name="Bleykasten C."/>
            <person name="Boisrame A."/>
            <person name="Boyer J."/>
            <person name="Cattolico L."/>
            <person name="Confanioleri F."/>
            <person name="de Daruvar A."/>
            <person name="Despons L."/>
            <person name="Fabre E."/>
            <person name="Fairhead C."/>
            <person name="Ferry-Dumazet H."/>
            <person name="Groppi A."/>
            <person name="Hantraye F."/>
            <person name="Hennequin C."/>
            <person name="Jauniaux N."/>
            <person name="Joyet P."/>
            <person name="Kachouri R."/>
            <person name="Kerrest A."/>
            <person name="Koszul R."/>
            <person name="Lemaire M."/>
            <person name="Lesur I."/>
            <person name="Ma L."/>
            <person name="Muller H."/>
            <person name="Nicaud J.-M."/>
            <person name="Nikolski M."/>
            <person name="Oztas S."/>
            <person name="Ozier-Kalogeropoulos O."/>
            <person name="Pellenz S."/>
            <person name="Potier S."/>
            <person name="Richard G.-F."/>
            <person name="Straub M.-L."/>
            <person name="Suleau A."/>
            <person name="Swennen D."/>
            <person name="Tekaia F."/>
            <person name="Wesolowski-Louvel M."/>
            <person name="Westhof E."/>
            <person name="Wirth B."/>
            <person name="Zeniou-Meyer M."/>
            <person name="Zivanovic Y."/>
            <person name="Bolotin-Fukuhara M."/>
            <person name="Thierry A."/>
            <person name="Bouchier C."/>
            <person name="Caudron B."/>
            <person name="Scarpelli C."/>
            <person name="Gaillardin C."/>
            <person name="Weissenbach J."/>
            <person name="Wincker P."/>
            <person name="Souciet J.-L."/>
        </authorList>
    </citation>
    <scope>NUCLEOTIDE SEQUENCE [LARGE SCALE GENOMIC DNA]</scope>
    <source>
        <strain>ATCC 2001 / BCRC 20586 / JCM 3761 / NBRC 0622 / NRRL Y-65 / CBS 138</strain>
    </source>
</reference>
<reference key="2">
    <citation type="journal article" date="2015" name="Cell. Microbiol.">
        <title>An essential role for phosphatidylinositol 3-kinase in the inhibition of phagosomal maturation, intracellular survival and virulence in Candida glabrata.</title>
        <authorList>
            <person name="Rai M.N."/>
            <person name="Sharma V."/>
            <person name="Balusu S."/>
            <person name="Kaur R."/>
        </authorList>
    </citation>
    <scope>DISRUPTION PHENOTYPE</scope>
</reference>
<feature type="chain" id="PRO_0000458895" description="Vacuolar protein sorting-associated protein 38">
    <location>
        <begin position="1"/>
        <end position="432"/>
    </location>
</feature>
<feature type="transmembrane region" description="Helical" evidence="2">
    <location>
        <begin position="348"/>
        <end position="365"/>
    </location>
</feature>
<feature type="coiled-coil region" evidence="2">
    <location>
        <begin position="216"/>
        <end position="287"/>
    </location>
</feature>
<feature type="glycosylation site" description="N-linked (GlcNAc...) asparagine" evidence="3">
    <location>
        <position position="20"/>
    </location>
</feature>
<protein>
    <recommendedName>
        <fullName evidence="5">Vacuolar protein sorting-associated protein 38</fullName>
    </recommendedName>
</protein>
<dbReference type="EMBL" id="CR380948">
    <property type="protein sequence ID" value="CAG57992.1"/>
    <property type="molecule type" value="Genomic_DNA"/>
</dbReference>
<dbReference type="RefSeq" id="XP_445092.1">
    <property type="nucleotide sequence ID" value="XM_445092.1"/>
</dbReference>
<dbReference type="SMR" id="Q6FXH9"/>
<dbReference type="FunCoup" id="Q6FXH9">
    <property type="interactions" value="38"/>
</dbReference>
<dbReference type="STRING" id="284593.Q6FXH9"/>
<dbReference type="EnsemblFungi" id="CAGL0B02772g-T">
    <property type="protein sequence ID" value="CAGL0B02772g-T-p1"/>
    <property type="gene ID" value="CAGL0B02772g"/>
</dbReference>
<dbReference type="GeneID" id="2886636"/>
<dbReference type="KEGG" id="cgr:2886636"/>
<dbReference type="CGD" id="CAL0127676">
    <property type="gene designation" value="VPS38"/>
</dbReference>
<dbReference type="VEuPathDB" id="FungiDB:CAGL0B02772g"/>
<dbReference type="eggNOG" id="ENOG502RY42">
    <property type="taxonomic scope" value="Eukaryota"/>
</dbReference>
<dbReference type="HOGENOM" id="CLU_050916_0_0_1"/>
<dbReference type="InParanoid" id="Q6FXH9"/>
<dbReference type="OMA" id="AFNENIM"/>
<dbReference type="Proteomes" id="UP000002428">
    <property type="component" value="Chromosome B"/>
</dbReference>
<dbReference type="GO" id="GO:0010008">
    <property type="term" value="C:endosome membrane"/>
    <property type="evidence" value="ECO:0007669"/>
    <property type="project" value="UniProtKB-SubCell"/>
</dbReference>
<dbReference type="GO" id="GO:0005794">
    <property type="term" value="C:Golgi apparatus"/>
    <property type="evidence" value="ECO:0007669"/>
    <property type="project" value="UniProtKB-SubCell"/>
</dbReference>
<dbReference type="GO" id="GO:0034272">
    <property type="term" value="C:phosphatidylinositol 3-kinase complex, class III, type II"/>
    <property type="evidence" value="ECO:0007669"/>
    <property type="project" value="InterPro"/>
</dbReference>
<dbReference type="InterPro" id="IPR040939">
    <property type="entry name" value="Vps38"/>
</dbReference>
<dbReference type="Pfam" id="PF17649">
    <property type="entry name" value="VPS38"/>
    <property type="match status" value="1"/>
</dbReference>
<keyword id="KW-0175">Coiled coil</keyword>
<keyword id="KW-0967">Endosome</keyword>
<keyword id="KW-0325">Glycoprotein</keyword>
<keyword id="KW-0333">Golgi apparatus</keyword>
<keyword id="KW-0472">Membrane</keyword>
<keyword id="KW-1185">Reference proteome</keyword>
<keyword id="KW-0812">Transmembrane</keyword>
<keyword id="KW-1133">Transmembrane helix</keyword>
<accession>Q6FXH9</accession>